<feature type="chain" id="PRO_0000056793" description="CDP-diacylglycerol--serine O-phosphatidyltransferase">
    <location>
        <begin position="1"/>
        <end position="177"/>
    </location>
</feature>
<feature type="transmembrane region" description="Helical" evidence="1">
    <location>
        <begin position="4"/>
        <end position="24"/>
    </location>
</feature>
<feature type="transmembrane region" description="Helical" evidence="1">
    <location>
        <begin position="28"/>
        <end position="48"/>
    </location>
</feature>
<feature type="transmembrane region" description="Helical" evidence="1">
    <location>
        <begin position="77"/>
        <end position="97"/>
    </location>
</feature>
<feature type="transmembrane region" description="Helical" evidence="1">
    <location>
        <begin position="116"/>
        <end position="136"/>
    </location>
</feature>
<feature type="transmembrane region" description="Helical" evidence="1">
    <location>
        <begin position="140"/>
        <end position="160"/>
    </location>
</feature>
<keyword id="KW-1003">Cell membrane</keyword>
<keyword id="KW-0444">Lipid biosynthesis</keyword>
<keyword id="KW-0443">Lipid metabolism</keyword>
<keyword id="KW-0472">Membrane</keyword>
<keyword id="KW-0594">Phospholipid biosynthesis</keyword>
<keyword id="KW-1208">Phospholipid metabolism</keyword>
<keyword id="KW-1185">Reference proteome</keyword>
<keyword id="KW-0808">Transferase</keyword>
<keyword id="KW-0812">Transmembrane</keyword>
<keyword id="KW-1133">Transmembrane helix</keyword>
<gene>
    <name type="primary">pssA</name>
    <name type="synonym">pss</name>
    <name type="ordered locus">BSU02270</name>
</gene>
<accession>P39823</accession>
<comment type="catalytic activity">
    <reaction>
        <text>a CDP-1,2-diacyl-sn-glycerol + L-serine = a 1,2-diacyl-sn-glycero-3-phospho-L-serine + CMP + H(+)</text>
        <dbReference type="Rhea" id="RHEA:16913"/>
        <dbReference type="ChEBI" id="CHEBI:15378"/>
        <dbReference type="ChEBI" id="CHEBI:33384"/>
        <dbReference type="ChEBI" id="CHEBI:57262"/>
        <dbReference type="ChEBI" id="CHEBI:58332"/>
        <dbReference type="ChEBI" id="CHEBI:60377"/>
        <dbReference type="EC" id="2.7.8.8"/>
    </reaction>
</comment>
<comment type="subcellular location">
    <subcellularLocation>
        <location>Cell membrane</location>
        <topology>Multi-pass membrane protein</topology>
    </subcellularLocation>
</comment>
<comment type="disruption phenotype">
    <text evidence="2">Cells appear normal, no effect on flotillin cluster numbers or size.</text>
</comment>
<comment type="similarity">
    <text evidence="3">Belongs to the CDP-alcohol phosphatidyltransferase class-I family.</text>
</comment>
<proteinExistence type="inferred from homology"/>
<protein>
    <recommendedName>
        <fullName>CDP-diacylglycerol--serine O-phosphatidyltransferase</fullName>
        <ecNumber>2.7.8.8</ecNumber>
    </recommendedName>
    <alternativeName>
        <fullName>Phosphatidylserine synthase</fullName>
    </alternativeName>
</protein>
<evidence type="ECO:0000255" key="1"/>
<evidence type="ECO:0000269" key="2">
    <source>
    </source>
</evidence>
<evidence type="ECO:0000305" key="3"/>
<dbReference type="EC" id="2.7.8.8"/>
<dbReference type="EMBL" id="D38022">
    <property type="protein sequence ID" value="BAA07225.1"/>
    <property type="molecule type" value="Genomic_DNA"/>
</dbReference>
<dbReference type="EMBL" id="AB006424">
    <property type="protein sequence ID" value="BAA33124.1"/>
    <property type="molecule type" value="Genomic_DNA"/>
</dbReference>
<dbReference type="EMBL" id="AL009126">
    <property type="protein sequence ID" value="CAB12021.1"/>
    <property type="molecule type" value="Genomic_DNA"/>
</dbReference>
<dbReference type="PIR" id="A55537">
    <property type="entry name" value="A55537"/>
</dbReference>
<dbReference type="RefSeq" id="NP_388109.1">
    <property type="nucleotide sequence ID" value="NC_000964.3"/>
</dbReference>
<dbReference type="RefSeq" id="WP_009966430.1">
    <property type="nucleotide sequence ID" value="NZ_OZ025638.1"/>
</dbReference>
<dbReference type="SMR" id="P39823"/>
<dbReference type="FunCoup" id="P39823">
    <property type="interactions" value="268"/>
</dbReference>
<dbReference type="STRING" id="224308.BSU02270"/>
<dbReference type="PaxDb" id="224308-BSU02270"/>
<dbReference type="DNASU" id="938427"/>
<dbReference type="EnsemblBacteria" id="CAB12021">
    <property type="protein sequence ID" value="CAB12021"/>
    <property type="gene ID" value="BSU_02270"/>
</dbReference>
<dbReference type="GeneID" id="938427"/>
<dbReference type="KEGG" id="bsu:BSU02270"/>
<dbReference type="PATRIC" id="fig|224308.179.peg.233"/>
<dbReference type="eggNOG" id="COG1183">
    <property type="taxonomic scope" value="Bacteria"/>
</dbReference>
<dbReference type="InParanoid" id="P39823"/>
<dbReference type="OrthoDB" id="9777147at2"/>
<dbReference type="PhylomeDB" id="P39823"/>
<dbReference type="BioCyc" id="BSUB:BSU02270-MONOMER"/>
<dbReference type="BioCyc" id="MetaCyc:MONOMER-14512"/>
<dbReference type="Proteomes" id="UP000001570">
    <property type="component" value="Chromosome"/>
</dbReference>
<dbReference type="GO" id="GO:0005886">
    <property type="term" value="C:plasma membrane"/>
    <property type="evidence" value="ECO:0007669"/>
    <property type="project" value="UniProtKB-SubCell"/>
</dbReference>
<dbReference type="GO" id="GO:0003882">
    <property type="term" value="F:CDP-diacylglycerol-serine O-phosphatidyltransferase activity"/>
    <property type="evidence" value="ECO:0007669"/>
    <property type="project" value="UniProtKB-EC"/>
</dbReference>
<dbReference type="GO" id="GO:0008654">
    <property type="term" value="P:phospholipid biosynthetic process"/>
    <property type="evidence" value="ECO:0007669"/>
    <property type="project" value="UniProtKB-KW"/>
</dbReference>
<dbReference type="Gene3D" id="1.20.120.1760">
    <property type="match status" value="1"/>
</dbReference>
<dbReference type="InterPro" id="IPR050324">
    <property type="entry name" value="CDP-alcohol_PTase-I"/>
</dbReference>
<dbReference type="InterPro" id="IPR004533">
    <property type="entry name" value="CDP-diaglyc--ser_O-PTrfase"/>
</dbReference>
<dbReference type="InterPro" id="IPR000462">
    <property type="entry name" value="CDP-OH_P_trans"/>
</dbReference>
<dbReference type="InterPro" id="IPR043130">
    <property type="entry name" value="CDP-OH_PTrfase_TM_dom"/>
</dbReference>
<dbReference type="InterPro" id="IPR048254">
    <property type="entry name" value="CDP_ALCOHOL_P_TRANSF_CS"/>
</dbReference>
<dbReference type="NCBIfam" id="TIGR00473">
    <property type="entry name" value="pssA"/>
    <property type="match status" value="1"/>
</dbReference>
<dbReference type="PANTHER" id="PTHR14269">
    <property type="entry name" value="CDP-DIACYLGLYCEROL--GLYCEROL-3-PHOSPHATE 3-PHOSPHATIDYLTRANSFERASE-RELATED"/>
    <property type="match status" value="1"/>
</dbReference>
<dbReference type="PANTHER" id="PTHR14269:SF59">
    <property type="entry name" value="CDP-DIACYLGLYCEROL--SERINE O-PHOSPHATIDYLTRANSFERASE"/>
    <property type="match status" value="1"/>
</dbReference>
<dbReference type="Pfam" id="PF01066">
    <property type="entry name" value="CDP-OH_P_transf"/>
    <property type="match status" value="1"/>
</dbReference>
<dbReference type="PROSITE" id="PS00379">
    <property type="entry name" value="CDP_ALCOHOL_P_TRANSF"/>
    <property type="match status" value="1"/>
</dbReference>
<sequence>MNYIPCMITIGNFICGLLAIHSLLYHNIHSAVLFIFTGMFLDFFDGMAARKLNAVSDMGRELDSFADLVTFGVAPSMLAYSVALYTLPFIGILCALTYSICGMLRLSKFNIEQSKLPTFIGMPIPFAGMCLVILSFTYNPILLAIGTCGLSYLMVSKIKFPHFKKHAAENLESGRWN</sequence>
<reference key="1">
    <citation type="journal article" date="1994" name="J. Bacteriol.">
        <title>Cloning, sequencing, and expression in Escherichia coli of the Bacillus subtilis gene for phosphatidylserine synthase.</title>
        <authorList>
            <person name="Okada M."/>
            <person name="Matsuzaki H."/>
            <person name="Shibuya I."/>
            <person name="Matsumoto K."/>
        </authorList>
    </citation>
    <scope>NUCLEOTIDE SEQUENCE [GENOMIC DNA]</scope>
    <source>
        <strain>168 / Marburg / ATCC 6051 / DSM 10 / JCM 1465 / NBRC 13719 / NCIMB 3610 / NRRL NRS-744 / VKM B-501</strain>
    </source>
</reference>
<reference key="2">
    <citation type="submission" date="1997-07" db="EMBL/GenBank/DDBJ databases">
        <title>Sequence analysis of the 70kb region between 17 and 23 degree of the Bacillus subtilis chromosome.</title>
        <authorList>
            <person name="Haga K."/>
            <person name="Liu H."/>
            <person name="Yasumoto K."/>
            <person name="Takahashi H."/>
            <person name="Yoshikawa H."/>
        </authorList>
    </citation>
    <scope>NUCLEOTIDE SEQUENCE [GENOMIC DNA]</scope>
    <source>
        <strain>168</strain>
    </source>
</reference>
<reference key="3">
    <citation type="journal article" date="1997" name="Nature">
        <title>The complete genome sequence of the Gram-positive bacterium Bacillus subtilis.</title>
        <authorList>
            <person name="Kunst F."/>
            <person name="Ogasawara N."/>
            <person name="Moszer I."/>
            <person name="Albertini A.M."/>
            <person name="Alloni G."/>
            <person name="Azevedo V."/>
            <person name="Bertero M.G."/>
            <person name="Bessieres P."/>
            <person name="Bolotin A."/>
            <person name="Borchert S."/>
            <person name="Borriss R."/>
            <person name="Boursier L."/>
            <person name="Brans A."/>
            <person name="Braun M."/>
            <person name="Brignell S.C."/>
            <person name="Bron S."/>
            <person name="Brouillet S."/>
            <person name="Bruschi C.V."/>
            <person name="Caldwell B."/>
            <person name="Capuano V."/>
            <person name="Carter N.M."/>
            <person name="Choi S.-K."/>
            <person name="Codani J.-J."/>
            <person name="Connerton I.F."/>
            <person name="Cummings N.J."/>
            <person name="Daniel R.A."/>
            <person name="Denizot F."/>
            <person name="Devine K.M."/>
            <person name="Duesterhoeft A."/>
            <person name="Ehrlich S.D."/>
            <person name="Emmerson P.T."/>
            <person name="Entian K.-D."/>
            <person name="Errington J."/>
            <person name="Fabret C."/>
            <person name="Ferrari E."/>
            <person name="Foulger D."/>
            <person name="Fritz C."/>
            <person name="Fujita M."/>
            <person name="Fujita Y."/>
            <person name="Fuma S."/>
            <person name="Galizzi A."/>
            <person name="Galleron N."/>
            <person name="Ghim S.-Y."/>
            <person name="Glaser P."/>
            <person name="Goffeau A."/>
            <person name="Golightly E.J."/>
            <person name="Grandi G."/>
            <person name="Guiseppi G."/>
            <person name="Guy B.J."/>
            <person name="Haga K."/>
            <person name="Haiech J."/>
            <person name="Harwood C.R."/>
            <person name="Henaut A."/>
            <person name="Hilbert H."/>
            <person name="Holsappel S."/>
            <person name="Hosono S."/>
            <person name="Hullo M.-F."/>
            <person name="Itaya M."/>
            <person name="Jones L.-M."/>
            <person name="Joris B."/>
            <person name="Karamata D."/>
            <person name="Kasahara Y."/>
            <person name="Klaerr-Blanchard M."/>
            <person name="Klein C."/>
            <person name="Kobayashi Y."/>
            <person name="Koetter P."/>
            <person name="Koningstein G."/>
            <person name="Krogh S."/>
            <person name="Kumano M."/>
            <person name="Kurita K."/>
            <person name="Lapidus A."/>
            <person name="Lardinois S."/>
            <person name="Lauber J."/>
            <person name="Lazarevic V."/>
            <person name="Lee S.-M."/>
            <person name="Levine A."/>
            <person name="Liu H."/>
            <person name="Masuda S."/>
            <person name="Mauel C."/>
            <person name="Medigue C."/>
            <person name="Medina N."/>
            <person name="Mellado R.P."/>
            <person name="Mizuno M."/>
            <person name="Moestl D."/>
            <person name="Nakai S."/>
            <person name="Noback M."/>
            <person name="Noone D."/>
            <person name="O'Reilly M."/>
            <person name="Ogawa K."/>
            <person name="Ogiwara A."/>
            <person name="Oudega B."/>
            <person name="Park S.-H."/>
            <person name="Parro V."/>
            <person name="Pohl T.M."/>
            <person name="Portetelle D."/>
            <person name="Porwollik S."/>
            <person name="Prescott A.M."/>
            <person name="Presecan E."/>
            <person name="Pujic P."/>
            <person name="Purnelle B."/>
            <person name="Rapoport G."/>
            <person name="Rey M."/>
            <person name="Reynolds S."/>
            <person name="Rieger M."/>
            <person name="Rivolta C."/>
            <person name="Rocha E."/>
            <person name="Roche B."/>
            <person name="Rose M."/>
            <person name="Sadaie Y."/>
            <person name="Sato T."/>
            <person name="Scanlan E."/>
            <person name="Schleich S."/>
            <person name="Schroeter R."/>
            <person name="Scoffone F."/>
            <person name="Sekiguchi J."/>
            <person name="Sekowska A."/>
            <person name="Seror S.J."/>
            <person name="Serror P."/>
            <person name="Shin B.-S."/>
            <person name="Soldo B."/>
            <person name="Sorokin A."/>
            <person name="Tacconi E."/>
            <person name="Takagi T."/>
            <person name="Takahashi H."/>
            <person name="Takemaru K."/>
            <person name="Takeuchi M."/>
            <person name="Tamakoshi A."/>
            <person name="Tanaka T."/>
            <person name="Terpstra P."/>
            <person name="Tognoni A."/>
            <person name="Tosato V."/>
            <person name="Uchiyama S."/>
            <person name="Vandenbol M."/>
            <person name="Vannier F."/>
            <person name="Vassarotti A."/>
            <person name="Viari A."/>
            <person name="Wambutt R."/>
            <person name="Wedler E."/>
            <person name="Wedler H."/>
            <person name="Weitzenegger T."/>
            <person name="Winters P."/>
            <person name="Wipat A."/>
            <person name="Yamamoto H."/>
            <person name="Yamane K."/>
            <person name="Yasumoto K."/>
            <person name="Yata K."/>
            <person name="Yoshida K."/>
            <person name="Yoshikawa H.-F."/>
            <person name="Zumstein E."/>
            <person name="Yoshikawa H."/>
            <person name="Danchin A."/>
        </authorList>
    </citation>
    <scope>NUCLEOTIDE SEQUENCE [LARGE SCALE GENOMIC DNA]</scope>
    <source>
        <strain>168</strain>
    </source>
</reference>
<reference key="4">
    <citation type="journal article" date="2016" name="PLoS Genet.">
        <title>Super Resolution Fluorescence Microscopy and Tracking of Bacterial Flotillin (Reggie) Paralogs Provide Evidence for Defined-Sized Protein Microdomains within the Bacterial Membrane but Absence of Clusters Containing Detergent-Resistant Proteins.</title>
        <authorList>
            <person name="Dempwolff F."/>
            <person name="Schmidt F.K."/>
            <person name="Hervas A.B."/>
            <person name="Stroh A."/>
            <person name="Roesch T.C."/>
            <person name="Riese C.N."/>
            <person name="Dersch S."/>
            <person name="Heimerl T."/>
            <person name="Lucena D."/>
            <person name="Huelsbusch N."/>
            <person name="Stuermer C.A."/>
            <person name="Takeshita N."/>
            <person name="Fischer R."/>
            <person name="Eckhardt B."/>
            <person name="Graumann P.L."/>
        </authorList>
    </citation>
    <scope>DISRUPTION PHENOTYPE</scope>
    <source>
        <strain>168</strain>
    </source>
</reference>
<organism>
    <name type="scientific">Bacillus subtilis (strain 168)</name>
    <dbReference type="NCBI Taxonomy" id="224308"/>
    <lineage>
        <taxon>Bacteria</taxon>
        <taxon>Bacillati</taxon>
        <taxon>Bacillota</taxon>
        <taxon>Bacilli</taxon>
        <taxon>Bacillales</taxon>
        <taxon>Bacillaceae</taxon>
        <taxon>Bacillus</taxon>
    </lineage>
</organism>
<name>PSS_BACSU</name>